<proteinExistence type="evidence at transcript level"/>
<name>DGAT2_XENLA</name>
<reference key="1">
    <citation type="submission" date="2003-10" db="EMBL/GenBank/DDBJ databases">
        <authorList>
            <consortium name="NIH - Xenopus Gene Collection (XGC) project"/>
        </authorList>
    </citation>
    <scope>NUCLEOTIDE SEQUENCE [LARGE SCALE MRNA]</scope>
    <source>
        <tissue>Kidney</tissue>
    </source>
</reference>
<protein>
    <recommendedName>
        <fullName evidence="4">Diacylglycerol O-acyltransferase 2</fullName>
        <ecNumber evidence="1">2.3.1.20</ecNumber>
    </recommendedName>
    <alternativeName>
        <fullName evidence="1">Acyl-CoA retinol O-fatty-acyltransferase</fullName>
        <shortName evidence="1">ARAT</shortName>
        <shortName evidence="1">Retinol O-fatty-acyltransferase</shortName>
        <ecNumber evidence="1">2.3.1.76</ecNumber>
    </alternativeName>
    <alternativeName>
        <fullName>Diglyceride acyltransferase 2</fullName>
    </alternativeName>
</protein>
<sequence length="361" mass="40568">MKTIIAAYSGVLRGTGSSLLSAVHDLPSIPWLSKSSVVRHLQIISVLQWVLSFLILGVACTAVLVYIFCTDLWLIAALYFTWMVLDWNTPYKGGRRSSWVRNWAVWRYFRDYFPVKLVKTHNLLPSRNYIFGYHPHGIMCLGAFCNFGTEATGVSKKFPGIKCHLATLAGNFRMPVLREYLMSGGICPVNRDTINYILSKNGTGNAVVIAVGGAAESLNCRPGKNTVTLLHRKGFVKVALQHGADLVPIYSFGENETYKQVVFEEGSWGRWIQQKFQKYVGFAPCLFHGCSFFSSNSWGLVPYANPITTVVGEPITVPKIEQPTQKDVELYHSMYLSSLHRLFDKYKTKLGLPDSETLEFI</sequence>
<comment type="function">
    <text evidence="1">Essential acyltransferase that catalyzes the terminal and only committed step in triacylglycerol synthesis by using diacylglycerol and fatty acyl CoA as substrates. Required for synthesis and storage of intracellular triglycerides. Probably plays a central role in cytosolic lipid accumulation (By similarity).</text>
</comment>
<comment type="catalytic activity">
    <reaction evidence="1">
        <text>an acyl-CoA + a 1,2-diacyl-sn-glycerol = a triacyl-sn-glycerol + CoA</text>
        <dbReference type="Rhea" id="RHEA:10868"/>
        <dbReference type="ChEBI" id="CHEBI:17815"/>
        <dbReference type="ChEBI" id="CHEBI:57287"/>
        <dbReference type="ChEBI" id="CHEBI:58342"/>
        <dbReference type="ChEBI" id="CHEBI:64615"/>
        <dbReference type="EC" id="2.3.1.20"/>
    </reaction>
    <physiologicalReaction direction="left-to-right" evidence="1">
        <dbReference type="Rhea" id="RHEA:10869"/>
    </physiologicalReaction>
</comment>
<comment type="catalytic activity">
    <reaction evidence="1">
        <text>all-trans-retinol + an acyl-CoA = an all-trans-retinyl ester + CoA</text>
        <dbReference type="Rhea" id="RHEA:11488"/>
        <dbReference type="ChEBI" id="CHEBI:17336"/>
        <dbReference type="ChEBI" id="CHEBI:57287"/>
        <dbReference type="ChEBI" id="CHEBI:58342"/>
        <dbReference type="ChEBI" id="CHEBI:63410"/>
        <dbReference type="EC" id="2.3.1.76"/>
    </reaction>
    <physiologicalReaction direction="left-to-right" evidence="1">
        <dbReference type="Rhea" id="RHEA:11489"/>
    </physiologicalReaction>
</comment>
<comment type="catalytic activity">
    <reaction evidence="1">
        <text>2-(9Z-octadecenoyl)-glycerol + (9Z)-octadecenoyl-CoA = 1,2-di-(9Z-octadecenoyl)-sn-glycerol + CoA</text>
        <dbReference type="Rhea" id="RHEA:37911"/>
        <dbReference type="ChEBI" id="CHEBI:52333"/>
        <dbReference type="ChEBI" id="CHEBI:57287"/>
        <dbReference type="ChEBI" id="CHEBI:57387"/>
        <dbReference type="ChEBI" id="CHEBI:73990"/>
    </reaction>
    <physiologicalReaction direction="left-to-right" evidence="1">
        <dbReference type="Rhea" id="RHEA:37912"/>
    </physiologicalReaction>
</comment>
<comment type="catalytic activity">
    <reaction evidence="1">
        <text>1,2-di-(9Z-octadecenoyl)-sn-glycerol + (9Z)-octadecenoyl-CoA = 1,2,3-tri-(9Z-octadecenoyl)-glycerol + CoA</text>
        <dbReference type="Rhea" id="RHEA:38219"/>
        <dbReference type="ChEBI" id="CHEBI:52333"/>
        <dbReference type="ChEBI" id="CHEBI:53753"/>
        <dbReference type="ChEBI" id="CHEBI:57287"/>
        <dbReference type="ChEBI" id="CHEBI:57387"/>
    </reaction>
    <physiologicalReaction direction="left-to-right" evidence="1">
        <dbReference type="Rhea" id="RHEA:38220"/>
    </physiologicalReaction>
</comment>
<comment type="catalytic activity">
    <reaction evidence="1">
        <text>all-trans-retinol + hexadecanoyl-CoA = all-trans-retinyl hexadecanoate + CoA</text>
        <dbReference type="Rhea" id="RHEA:38175"/>
        <dbReference type="ChEBI" id="CHEBI:17336"/>
        <dbReference type="ChEBI" id="CHEBI:17616"/>
        <dbReference type="ChEBI" id="CHEBI:57287"/>
        <dbReference type="ChEBI" id="CHEBI:57379"/>
    </reaction>
    <physiologicalReaction direction="left-to-right" evidence="1">
        <dbReference type="Rhea" id="RHEA:38176"/>
    </physiologicalReaction>
</comment>
<comment type="catalytic activity">
    <reaction evidence="1">
        <text>1-O-(9Z-octadecenyl)-glycerol + (9Z)-octadecenoyl-CoA = 1-O-(9Z-octadecyl)-3-(9Z-octadecenoyl)-glycerol + CoA</text>
        <dbReference type="Rhea" id="RHEA:55340"/>
        <dbReference type="ChEBI" id="CHEBI:34116"/>
        <dbReference type="ChEBI" id="CHEBI:57287"/>
        <dbReference type="ChEBI" id="CHEBI:57387"/>
        <dbReference type="ChEBI" id="CHEBI:197429"/>
    </reaction>
    <physiologicalReaction direction="left-to-right" evidence="1">
        <dbReference type="Rhea" id="RHEA:55341"/>
    </physiologicalReaction>
</comment>
<comment type="catalytic activity">
    <reaction evidence="1">
        <text>1-(9Z-octadecenoyl)-glycerol + (9Z)-octadecenoyl-CoA = 1,2-di-(9Z-octadecenoyl)-glycerol + CoA</text>
        <dbReference type="Rhea" id="RHEA:37915"/>
        <dbReference type="ChEBI" id="CHEBI:52323"/>
        <dbReference type="ChEBI" id="CHEBI:57287"/>
        <dbReference type="ChEBI" id="CHEBI:57387"/>
        <dbReference type="ChEBI" id="CHEBI:75342"/>
    </reaction>
    <physiologicalReaction direction="left-to-right" evidence="1">
        <dbReference type="Rhea" id="RHEA:37916"/>
    </physiologicalReaction>
</comment>
<comment type="catalytic activity">
    <reaction evidence="2">
        <text>1,2-di-(9Z-octadecenoyl)-sn-glycerol + hexadecanoyl-CoA = 1,2-di-(9Z)-octadecenoyl-3-hexadecanoyl-sn-glycerol + CoA</text>
        <dbReference type="Rhea" id="RHEA:38163"/>
        <dbReference type="ChEBI" id="CHEBI:52333"/>
        <dbReference type="ChEBI" id="CHEBI:57287"/>
        <dbReference type="ChEBI" id="CHEBI:57379"/>
        <dbReference type="ChEBI" id="CHEBI:75583"/>
    </reaction>
    <physiologicalReaction direction="left-to-right" evidence="2">
        <dbReference type="Rhea" id="RHEA:38164"/>
    </physiologicalReaction>
</comment>
<comment type="catalytic activity">
    <reaction evidence="2">
        <text>1,3-di-(9Z-octadecenoyl)-glycerol + (9Z)-octadecenoyl-CoA = 1,2,3-tri-(9Z-octadecenoyl)-glycerol + CoA</text>
        <dbReference type="Rhea" id="RHEA:38435"/>
        <dbReference type="ChEBI" id="CHEBI:53753"/>
        <dbReference type="ChEBI" id="CHEBI:57287"/>
        <dbReference type="ChEBI" id="CHEBI:57387"/>
        <dbReference type="ChEBI" id="CHEBI:75735"/>
    </reaction>
    <physiologicalReaction direction="left-to-right" evidence="2">
        <dbReference type="Rhea" id="RHEA:38436"/>
    </physiologicalReaction>
</comment>
<comment type="catalytic activity">
    <reaction evidence="2">
        <text>2,3-di-(9Z)-octadecenoyl-sn-glycerol + (9Z)-octadecenoyl-CoA = 1,2,3-tri-(9Z-octadecenoyl)-glycerol + CoA</text>
        <dbReference type="Rhea" id="RHEA:38439"/>
        <dbReference type="ChEBI" id="CHEBI:53753"/>
        <dbReference type="ChEBI" id="CHEBI:57287"/>
        <dbReference type="ChEBI" id="CHEBI:57387"/>
        <dbReference type="ChEBI" id="CHEBI:75824"/>
    </reaction>
    <physiologicalReaction direction="left-to-right" evidence="2">
        <dbReference type="Rhea" id="RHEA:38440"/>
    </physiologicalReaction>
</comment>
<comment type="catalytic activity">
    <reaction evidence="2">
        <text>2-(9Z-octadecenoyl)-glycerol + hexadecanoyl-CoA = 1-hexadecanoyl-2-(9Z-octadecenoyl)-sn-glycerol + CoA</text>
        <dbReference type="Rhea" id="RHEA:38071"/>
        <dbReference type="ChEBI" id="CHEBI:57287"/>
        <dbReference type="ChEBI" id="CHEBI:57379"/>
        <dbReference type="ChEBI" id="CHEBI:73990"/>
        <dbReference type="ChEBI" id="CHEBI:75466"/>
    </reaction>
    <physiologicalReaction direction="left-to-right" evidence="2">
        <dbReference type="Rhea" id="RHEA:38072"/>
    </physiologicalReaction>
</comment>
<comment type="pathway">
    <text>Glycerolipid metabolism; triacylglycerol biosynthesis.</text>
</comment>
<comment type="subcellular location">
    <subcellularLocation>
        <location evidence="1">Endoplasmic reticulum membrane</location>
        <topology evidence="1">Multi-pass membrane protein</topology>
    </subcellularLocation>
    <subcellularLocation>
        <location evidence="1">Lipid droplet</location>
    </subcellularLocation>
    <subcellularLocation>
        <location evidence="1">Cytoplasm</location>
        <location evidence="1">Perinuclear region</location>
    </subcellularLocation>
</comment>
<comment type="similarity">
    <text evidence="4">Belongs to the diacylglycerol acyltransferase family.</text>
</comment>
<keyword id="KW-0012">Acyltransferase</keyword>
<keyword id="KW-0963">Cytoplasm</keyword>
<keyword id="KW-0256">Endoplasmic reticulum</keyword>
<keyword id="KW-0319">Glycerol metabolism</keyword>
<keyword id="KW-0444">Lipid biosynthesis</keyword>
<keyword id="KW-0551">Lipid droplet</keyword>
<keyword id="KW-0443">Lipid metabolism</keyword>
<keyword id="KW-0472">Membrane</keyword>
<keyword id="KW-1185">Reference proteome</keyword>
<keyword id="KW-0808">Transferase</keyword>
<keyword id="KW-0812">Transmembrane</keyword>
<keyword id="KW-1133">Transmembrane helix</keyword>
<dbReference type="EC" id="2.3.1.20" evidence="1"/>
<dbReference type="EC" id="2.3.1.76" evidence="1"/>
<dbReference type="EMBL" id="BC059991">
    <property type="protein sequence ID" value="AAH59991.1"/>
    <property type="molecule type" value="mRNA"/>
</dbReference>
<dbReference type="RefSeq" id="NP_001083204.1">
    <property type="nucleotide sequence ID" value="NM_001089735.1"/>
</dbReference>
<dbReference type="DNASU" id="398800"/>
<dbReference type="GeneID" id="398800"/>
<dbReference type="KEGG" id="xla:398800"/>
<dbReference type="AGR" id="Xenbase:XB-GENE-6078761"/>
<dbReference type="CTD" id="398800"/>
<dbReference type="Xenbase" id="XB-GENE-6078761">
    <property type="gene designation" value="dgat2.L"/>
</dbReference>
<dbReference type="OMA" id="YRHYRNY"/>
<dbReference type="OrthoDB" id="264532at2759"/>
<dbReference type="UniPathway" id="UPA00282"/>
<dbReference type="Proteomes" id="UP000186698">
    <property type="component" value="Chromosome 2L"/>
</dbReference>
<dbReference type="Bgee" id="398800">
    <property type="expression patterns" value="Expressed in ovary and 17 other cell types or tissues"/>
</dbReference>
<dbReference type="GO" id="GO:0005789">
    <property type="term" value="C:endoplasmic reticulum membrane"/>
    <property type="evidence" value="ECO:0000250"/>
    <property type="project" value="UniProtKB"/>
</dbReference>
<dbReference type="GO" id="GO:0005811">
    <property type="term" value="C:lipid droplet"/>
    <property type="evidence" value="ECO:0000250"/>
    <property type="project" value="UniProtKB"/>
</dbReference>
<dbReference type="GO" id="GO:1990578">
    <property type="term" value="C:perinuclear endoplasmic reticulum membrane"/>
    <property type="evidence" value="ECO:0000250"/>
    <property type="project" value="UniProtKB"/>
</dbReference>
<dbReference type="GO" id="GO:0004144">
    <property type="term" value="F:diacylglycerol O-acyltransferase activity"/>
    <property type="evidence" value="ECO:0000250"/>
    <property type="project" value="UniProtKB"/>
</dbReference>
<dbReference type="GO" id="GO:0050252">
    <property type="term" value="F:retinol O-fatty-acyltransferase activity"/>
    <property type="evidence" value="ECO:0007669"/>
    <property type="project" value="UniProtKB-EC"/>
</dbReference>
<dbReference type="GO" id="GO:0006651">
    <property type="term" value="P:diacylglycerol biosynthetic process"/>
    <property type="evidence" value="ECO:0000250"/>
    <property type="project" value="UniProtKB"/>
</dbReference>
<dbReference type="GO" id="GO:0046339">
    <property type="term" value="P:diacylglycerol metabolic process"/>
    <property type="evidence" value="ECO:0000318"/>
    <property type="project" value="GO_Central"/>
</dbReference>
<dbReference type="GO" id="GO:0006071">
    <property type="term" value="P:glycerol metabolic process"/>
    <property type="evidence" value="ECO:0007669"/>
    <property type="project" value="UniProtKB-KW"/>
</dbReference>
<dbReference type="GO" id="GO:0006640">
    <property type="term" value="P:monoacylglycerol biosynthetic process"/>
    <property type="evidence" value="ECO:0000250"/>
    <property type="project" value="UniProtKB"/>
</dbReference>
<dbReference type="GO" id="GO:0019432">
    <property type="term" value="P:triglyceride biosynthetic process"/>
    <property type="evidence" value="ECO:0000250"/>
    <property type="project" value="UniProtKB"/>
</dbReference>
<dbReference type="CDD" id="cd07987">
    <property type="entry name" value="LPLAT_MGAT-like"/>
    <property type="match status" value="1"/>
</dbReference>
<dbReference type="InterPro" id="IPR007130">
    <property type="entry name" value="DAGAT"/>
</dbReference>
<dbReference type="PANTHER" id="PTHR12317">
    <property type="entry name" value="DIACYLGLYCEROL O-ACYLTRANSFERASE"/>
    <property type="match status" value="1"/>
</dbReference>
<dbReference type="PANTHER" id="PTHR12317:SF14">
    <property type="entry name" value="DIACYLGLYCEROL O-ACYLTRANSFERASE 2"/>
    <property type="match status" value="1"/>
</dbReference>
<dbReference type="Pfam" id="PF03982">
    <property type="entry name" value="DAGAT"/>
    <property type="match status" value="1"/>
</dbReference>
<organism>
    <name type="scientific">Xenopus laevis</name>
    <name type="common">African clawed frog</name>
    <dbReference type="NCBI Taxonomy" id="8355"/>
    <lineage>
        <taxon>Eukaryota</taxon>
        <taxon>Metazoa</taxon>
        <taxon>Chordata</taxon>
        <taxon>Craniata</taxon>
        <taxon>Vertebrata</taxon>
        <taxon>Euteleostomi</taxon>
        <taxon>Amphibia</taxon>
        <taxon>Batrachia</taxon>
        <taxon>Anura</taxon>
        <taxon>Pipoidea</taxon>
        <taxon>Pipidae</taxon>
        <taxon>Xenopodinae</taxon>
        <taxon>Xenopus</taxon>
        <taxon>Xenopus</taxon>
    </lineage>
</organism>
<gene>
    <name type="primary">dgat2</name>
</gene>
<accession>Q6PAZ3</accession>
<evidence type="ECO:0000250" key="1">
    <source>
        <dbReference type="UniProtKB" id="Q96PD7"/>
    </source>
</evidence>
<evidence type="ECO:0000250" key="2">
    <source>
        <dbReference type="UniProtKB" id="Q9DCV3"/>
    </source>
</evidence>
<evidence type="ECO:0000255" key="3"/>
<evidence type="ECO:0000305" key="4"/>
<feature type="chain" id="PRO_0000249049" description="Diacylglycerol O-acyltransferase 2">
    <location>
        <begin position="1"/>
        <end position="361"/>
    </location>
</feature>
<feature type="topological domain" description="Cytoplasmic" evidence="3">
    <location>
        <begin position="1"/>
        <end position="42"/>
    </location>
</feature>
<feature type="transmembrane region" description="Helical" evidence="3">
    <location>
        <begin position="43"/>
        <end position="61"/>
    </location>
</feature>
<feature type="topological domain" description="Lumenal" evidence="3">
    <location>
        <begin position="62"/>
        <end position="65"/>
    </location>
</feature>
<feature type="transmembrane region" description="Helical" evidence="3">
    <location>
        <begin position="66"/>
        <end position="85"/>
    </location>
</feature>
<feature type="topological domain" description="Cytoplasmic" evidence="3">
    <location>
        <begin position="86"/>
        <end position="361"/>
    </location>
</feature>